<proteinExistence type="evidence at protein level"/>
<evidence type="ECO:0000269" key="1">
    <source>
    </source>
</evidence>
<evidence type="ECO:0000303" key="2">
    <source>
    </source>
</evidence>
<evidence type="ECO:0000312" key="3">
    <source>
        <dbReference type="EMBL" id="CCP46310.1"/>
    </source>
</evidence>
<evidence type="ECO:0007744" key="4">
    <source>
        <dbReference type="PDB" id="5ZHC"/>
    </source>
</evidence>
<evidence type="ECO:0007744" key="5">
    <source>
        <dbReference type="PDB" id="5ZHV"/>
    </source>
</evidence>
<evidence type="ECO:0007744" key="6">
    <source>
        <dbReference type="PDB" id="5ZI8"/>
    </source>
</evidence>
<evidence type="ECO:0007829" key="7">
    <source>
        <dbReference type="PDB" id="5ZHC"/>
    </source>
</evidence>
<organism>
    <name type="scientific">Mycobacterium tuberculosis (strain ATCC 25618 / H37Rv)</name>
    <dbReference type="NCBI Taxonomy" id="83332"/>
    <lineage>
        <taxon>Bacteria</taxon>
        <taxon>Bacillati</taxon>
        <taxon>Actinomycetota</taxon>
        <taxon>Actinomycetes</taxon>
        <taxon>Mycobacteriales</taxon>
        <taxon>Mycobacteriaceae</taxon>
        <taxon>Mycobacterium</taxon>
        <taxon>Mycobacterium tuberculosis complex</taxon>
    </lineage>
</organism>
<feature type="chain" id="PRO_0000447364" description="Transcriptional regulator Rv3488">
    <location>
        <begin position="1"/>
        <end position="107"/>
    </location>
</feature>
<feature type="binding site" evidence="1">
    <location>
        <position position="16"/>
    </location>
    <ligand>
        <name>Cd(2+)</name>
        <dbReference type="ChEBI" id="CHEBI:48775"/>
    </ligand>
</feature>
<feature type="binding site" evidence="1">
    <location>
        <position position="30"/>
    </location>
    <ligand>
        <name>Cd(2+)</name>
        <dbReference type="ChEBI" id="CHEBI:48775"/>
    </ligand>
</feature>
<feature type="binding site" evidence="1">
    <location>
        <position position="34"/>
    </location>
    <ligand>
        <name>Cd(2+)</name>
        <dbReference type="ChEBI" id="CHEBI:48775"/>
    </ligand>
</feature>
<feature type="binding site" evidence="1">
    <location>
        <position position="101"/>
    </location>
    <ligand>
        <name>Cd(2+)</name>
        <dbReference type="ChEBI" id="CHEBI:48775"/>
    </ligand>
</feature>
<feature type="mutagenesis site" description="Abolishes cadmium and zinc binding." evidence="1">
    <original>H</original>
    <variation>A</variation>
    <location>
        <position position="16"/>
    </location>
</feature>
<feature type="mutagenesis site" description="Abolishes cadmium and zinc binding." evidence="1">
    <original>H</original>
    <variation>A</variation>
    <location>
        <position position="34"/>
    </location>
</feature>
<feature type="helix" evidence="7">
    <location>
        <begin position="1"/>
        <end position="19"/>
    </location>
</feature>
<feature type="helix" evidence="7">
    <location>
        <begin position="24"/>
        <end position="33"/>
    </location>
</feature>
<feature type="helix" evidence="7">
    <location>
        <begin position="40"/>
        <end position="52"/>
    </location>
</feature>
<feature type="strand" evidence="7">
    <location>
        <begin position="55"/>
        <end position="63"/>
    </location>
</feature>
<feature type="strand" evidence="7">
    <location>
        <begin position="66"/>
        <end position="73"/>
    </location>
</feature>
<feature type="helix" evidence="7">
    <location>
        <begin position="75"/>
        <end position="95"/>
    </location>
</feature>
<reference key="1">
    <citation type="journal article" date="1998" name="Nature">
        <title>Deciphering the biology of Mycobacterium tuberculosis from the complete genome sequence.</title>
        <authorList>
            <person name="Cole S.T."/>
            <person name="Brosch R."/>
            <person name="Parkhill J."/>
            <person name="Garnier T."/>
            <person name="Churcher C.M."/>
            <person name="Harris D.E."/>
            <person name="Gordon S.V."/>
            <person name="Eiglmeier K."/>
            <person name="Gas S."/>
            <person name="Barry C.E. III"/>
            <person name="Tekaia F."/>
            <person name="Badcock K."/>
            <person name="Basham D."/>
            <person name="Brown D."/>
            <person name="Chillingworth T."/>
            <person name="Connor R."/>
            <person name="Davies R.M."/>
            <person name="Devlin K."/>
            <person name="Feltwell T."/>
            <person name="Gentles S."/>
            <person name="Hamlin N."/>
            <person name="Holroyd S."/>
            <person name="Hornsby T."/>
            <person name="Jagels K."/>
            <person name="Krogh A."/>
            <person name="McLean J."/>
            <person name="Moule S."/>
            <person name="Murphy L.D."/>
            <person name="Oliver S."/>
            <person name="Osborne J."/>
            <person name="Quail M.A."/>
            <person name="Rajandream M.A."/>
            <person name="Rogers J."/>
            <person name="Rutter S."/>
            <person name="Seeger K."/>
            <person name="Skelton S."/>
            <person name="Squares S."/>
            <person name="Squares R."/>
            <person name="Sulston J.E."/>
            <person name="Taylor K."/>
            <person name="Whitehead S."/>
            <person name="Barrell B.G."/>
        </authorList>
    </citation>
    <scope>NUCLEOTIDE SEQUENCE [LARGE SCALE GENOMIC DNA]</scope>
    <source>
        <strain>ATCC 25618 / H37Rv</strain>
    </source>
</reference>
<reference key="2">
    <citation type="journal article" date="2011" name="Mol. Cell. Proteomics">
        <title>Proteogenomic analysis of Mycobacterium tuberculosis by high resolution mass spectrometry.</title>
        <authorList>
            <person name="Kelkar D.S."/>
            <person name="Kumar D."/>
            <person name="Kumar P."/>
            <person name="Balakrishnan L."/>
            <person name="Muthusamy B."/>
            <person name="Yadav A.K."/>
            <person name="Shrivastava P."/>
            <person name="Marimuthu A."/>
            <person name="Anand S."/>
            <person name="Sundaram H."/>
            <person name="Kingsbury R."/>
            <person name="Harsha H.C."/>
            <person name="Nair B."/>
            <person name="Prasad T.S."/>
            <person name="Chauhan D.S."/>
            <person name="Katoch K."/>
            <person name="Katoch V.M."/>
            <person name="Kumar P."/>
            <person name="Chaerkady R."/>
            <person name="Ramachandran S."/>
            <person name="Dash D."/>
            <person name="Pandey A."/>
        </authorList>
    </citation>
    <scope>IDENTIFICATION BY MASS SPECTROMETRY [LARGE SCALE ANALYSIS]</scope>
</reference>
<reference evidence="4 5 6" key="3">
    <citation type="journal article" date="2018" name="Biochem. J.">
        <title>Structural and functional characterization of the transcriptional regulator Rv3488 of Mycobacterium tuberculosis H37Rv.</title>
        <authorList>
            <person name="Kumari M."/>
            <person name="Pal R.K."/>
            <person name="Mishra A.K."/>
            <person name="Tripathi S."/>
            <person name="Biswal B.K."/>
            <person name="Srivastava K.K."/>
            <person name="Arora A."/>
        </authorList>
    </citation>
    <scope>X-RAY CRYSTALLOGRAPHY (1.97 ANGSTROMS) OF APOPROTEIN AND IN COMPLEXES WITH CADMIUM AND ZINC</scope>
    <scope>FUNCTION</scope>
    <scope>DNA-BINDING</scope>
    <scope>SUBUNIT</scope>
    <scope>DOMAIN</scope>
    <scope>MUTAGENESIS OF HIS-16 AND HIS-34</scope>
</reference>
<name>CDDTR_MYCTU</name>
<dbReference type="EMBL" id="AL123456">
    <property type="protein sequence ID" value="CCP46310.1"/>
    <property type="molecule type" value="Genomic_DNA"/>
</dbReference>
<dbReference type="RefSeq" id="NP_218005.1">
    <property type="nucleotide sequence ID" value="NC_000962.3"/>
</dbReference>
<dbReference type="RefSeq" id="WP_003418948.1">
    <property type="nucleotide sequence ID" value="NZ_NVQJ01000042.1"/>
</dbReference>
<dbReference type="PDB" id="5ZHC">
    <property type="method" value="X-ray"/>
    <property type="resolution" value="1.97 A"/>
    <property type="chains" value="A/B=1-107"/>
</dbReference>
<dbReference type="PDB" id="5ZHV">
    <property type="method" value="X-ray"/>
    <property type="resolution" value="2.40 A"/>
    <property type="chains" value="A/B=1-107"/>
</dbReference>
<dbReference type="PDB" id="5ZI8">
    <property type="method" value="X-ray"/>
    <property type="resolution" value="2.20 A"/>
    <property type="chains" value="A/B=1-107"/>
</dbReference>
<dbReference type="PDB" id="7WH4">
    <property type="method" value="X-ray"/>
    <property type="resolution" value="2.80 A"/>
    <property type="chains" value="A/B=1-107"/>
</dbReference>
<dbReference type="PDBsum" id="5ZHC"/>
<dbReference type="PDBsum" id="5ZHV"/>
<dbReference type="PDBsum" id="5ZI8"/>
<dbReference type="PDBsum" id="7WH4"/>
<dbReference type="SMR" id="I6X7F9"/>
<dbReference type="STRING" id="83332.Rv3488"/>
<dbReference type="PaxDb" id="83332-Rv3488"/>
<dbReference type="DNASU" id="888417"/>
<dbReference type="GeneID" id="888417"/>
<dbReference type="KEGG" id="mtu:Rv3488"/>
<dbReference type="KEGG" id="mtv:RVBD_3488"/>
<dbReference type="PATRIC" id="fig|83332.111.peg.3886"/>
<dbReference type="TubercuList" id="Rv3488"/>
<dbReference type="eggNOG" id="COG1695">
    <property type="taxonomic scope" value="Bacteria"/>
</dbReference>
<dbReference type="InParanoid" id="I6X7F9"/>
<dbReference type="OrthoDB" id="8443918at2"/>
<dbReference type="PhylomeDB" id="I6X7F9"/>
<dbReference type="Proteomes" id="UP000001584">
    <property type="component" value="Chromosome"/>
</dbReference>
<dbReference type="GO" id="GO:0003677">
    <property type="term" value="F:DNA binding"/>
    <property type="evidence" value="ECO:0007669"/>
    <property type="project" value="UniProtKB-KW"/>
</dbReference>
<dbReference type="GO" id="GO:0046872">
    <property type="term" value="F:metal ion binding"/>
    <property type="evidence" value="ECO:0007669"/>
    <property type="project" value="UniProtKB-KW"/>
</dbReference>
<dbReference type="Gene3D" id="1.10.10.10">
    <property type="entry name" value="Winged helix-like DNA-binding domain superfamily/Winged helix DNA-binding domain"/>
    <property type="match status" value="1"/>
</dbReference>
<dbReference type="InterPro" id="IPR052509">
    <property type="entry name" value="Metal_resp_DNA-bind_regulator"/>
</dbReference>
<dbReference type="InterPro" id="IPR005149">
    <property type="entry name" value="Tscrpt_reg_PadR_N"/>
</dbReference>
<dbReference type="InterPro" id="IPR036388">
    <property type="entry name" value="WH-like_DNA-bd_sf"/>
</dbReference>
<dbReference type="InterPro" id="IPR036390">
    <property type="entry name" value="WH_DNA-bd_sf"/>
</dbReference>
<dbReference type="PANTHER" id="PTHR33169">
    <property type="entry name" value="PADR-FAMILY TRANSCRIPTIONAL REGULATOR"/>
    <property type="match status" value="1"/>
</dbReference>
<dbReference type="PANTHER" id="PTHR33169:SF14">
    <property type="entry name" value="TRANSCRIPTIONAL REGULATOR RV3488"/>
    <property type="match status" value="1"/>
</dbReference>
<dbReference type="Pfam" id="PF03551">
    <property type="entry name" value="PadR"/>
    <property type="match status" value="1"/>
</dbReference>
<dbReference type="SUPFAM" id="SSF46785">
    <property type="entry name" value="Winged helix' DNA-binding domain"/>
    <property type="match status" value="1"/>
</dbReference>
<gene>
    <name evidence="3" type="ordered locus">Rv3488</name>
</gene>
<sequence>MREFQRAAVRLHILHHAADNEVHGAWLTQELSRHGYRVSPGTLYPTLHRLEADGLLVSEQRVVDGRARRVYRATPAGRAALTEDRRALEELAREVLGGQSHTAGNGT</sequence>
<comment type="function">
    <text evidence="1">May have transcription regulation and metal-detoxifying functions through which it may enhance intracellular survival of mycobacteria. Binds to its own promoter region and to the Rv1999c promoter region. It displays strong affinity for cadmium ions, but can also bind zinc, manganese and nickel. Expression increases the intracellular survival of recombinant M.smegmatis in murine macrophage cell line and increases its tolerance to cadmium ions.</text>
</comment>
<comment type="subunit">
    <text evidence="1">Homodimer.</text>
</comment>
<comment type="domain">
    <text evidence="1">Contains an N-terminal winged-helix-turn-helix (wHTH) DNA-binding domain and a C-terminal alpha helix, which is mainly involved in dimerization (PubMed:30266832). Binding of cadmium causes subtle conformational changes in all key metal-binding residues and conserved DNA-binding residues (PubMed:30266832).</text>
</comment>
<accession>I6X7F9</accession>
<protein>
    <recommendedName>
        <fullName evidence="2">Transcriptional regulator Rv3488</fullName>
    </recommendedName>
</protein>
<keyword id="KW-0002">3D-structure</keyword>
<keyword id="KW-0104">Cadmium</keyword>
<keyword id="KW-0238">DNA-binding</keyword>
<keyword id="KW-0479">Metal-binding</keyword>
<keyword id="KW-1185">Reference proteome</keyword>
<keyword id="KW-0804">Transcription</keyword>
<keyword id="KW-0805">Transcription regulation</keyword>